<name>NU2M_PARLI</name>
<protein>
    <recommendedName>
        <fullName>NADH-ubiquinone oxidoreductase chain 2</fullName>
        <ecNumber>7.1.1.2</ecNumber>
    </recommendedName>
    <alternativeName>
        <fullName>NADH dehydrogenase subunit 2</fullName>
    </alternativeName>
</protein>
<dbReference type="EC" id="7.1.1.2"/>
<dbReference type="EMBL" id="J04815">
    <property type="protein sequence ID" value="AAA68134.1"/>
    <property type="molecule type" value="Genomic_DNA"/>
</dbReference>
<dbReference type="EMBL" id="M16517">
    <property type="protein sequence ID" value="AAA31988.2"/>
    <property type="molecule type" value="Genomic_DNA"/>
</dbReference>
<dbReference type="PIR" id="B34284">
    <property type="entry name" value="B34284"/>
</dbReference>
<dbReference type="RefSeq" id="NP_008122.1">
    <property type="nucleotide sequence ID" value="NC_001572.1"/>
</dbReference>
<dbReference type="SMR" id="P12771"/>
<dbReference type="GeneID" id="807709"/>
<dbReference type="CTD" id="4536"/>
<dbReference type="GO" id="GO:0005743">
    <property type="term" value="C:mitochondrial inner membrane"/>
    <property type="evidence" value="ECO:0007669"/>
    <property type="project" value="UniProtKB-SubCell"/>
</dbReference>
<dbReference type="GO" id="GO:0008137">
    <property type="term" value="F:NADH dehydrogenase (ubiquinone) activity"/>
    <property type="evidence" value="ECO:0007669"/>
    <property type="project" value="UniProtKB-EC"/>
</dbReference>
<dbReference type="GO" id="GO:0006120">
    <property type="term" value="P:mitochondrial electron transport, NADH to ubiquinone"/>
    <property type="evidence" value="ECO:0007669"/>
    <property type="project" value="InterPro"/>
</dbReference>
<dbReference type="InterPro" id="IPR050175">
    <property type="entry name" value="Complex_I_Subunit_2"/>
</dbReference>
<dbReference type="InterPro" id="IPR010933">
    <property type="entry name" value="NADH_DH_su2_C"/>
</dbReference>
<dbReference type="InterPro" id="IPR003917">
    <property type="entry name" value="NADH_UbQ_OxRdtase_chain2"/>
</dbReference>
<dbReference type="InterPro" id="IPR001750">
    <property type="entry name" value="ND/Mrp_TM"/>
</dbReference>
<dbReference type="PANTHER" id="PTHR46552">
    <property type="entry name" value="NADH-UBIQUINONE OXIDOREDUCTASE CHAIN 2"/>
    <property type="match status" value="1"/>
</dbReference>
<dbReference type="PANTHER" id="PTHR46552:SF1">
    <property type="entry name" value="NADH-UBIQUINONE OXIDOREDUCTASE CHAIN 2"/>
    <property type="match status" value="1"/>
</dbReference>
<dbReference type="Pfam" id="PF06444">
    <property type="entry name" value="NADH_dehy_S2_C"/>
    <property type="match status" value="1"/>
</dbReference>
<dbReference type="Pfam" id="PF00361">
    <property type="entry name" value="Proton_antipo_M"/>
    <property type="match status" value="1"/>
</dbReference>
<dbReference type="PRINTS" id="PR01436">
    <property type="entry name" value="NADHDHGNASE2"/>
</dbReference>
<evidence type="ECO:0000250" key="1"/>
<evidence type="ECO:0000255" key="2"/>
<evidence type="ECO:0000305" key="3"/>
<feature type="chain" id="PRO_0000117620" description="NADH-ubiquinone oxidoreductase chain 2">
    <location>
        <begin position="1"/>
        <end position="352"/>
    </location>
</feature>
<feature type="transmembrane region" description="Helical" evidence="2">
    <location>
        <begin position="4"/>
        <end position="24"/>
    </location>
</feature>
<feature type="transmembrane region" description="Helical" evidence="2">
    <location>
        <begin position="26"/>
        <end position="46"/>
    </location>
</feature>
<feature type="transmembrane region" description="Helical" evidence="2">
    <location>
        <begin position="60"/>
        <end position="80"/>
    </location>
</feature>
<feature type="transmembrane region" description="Helical" evidence="2">
    <location>
        <begin position="96"/>
        <end position="116"/>
    </location>
</feature>
<feature type="transmembrane region" description="Helical" evidence="2">
    <location>
        <begin position="124"/>
        <end position="144"/>
    </location>
</feature>
<feature type="transmembrane region" description="Helical" evidence="2">
    <location>
        <begin position="150"/>
        <end position="170"/>
    </location>
</feature>
<feature type="transmembrane region" description="Helical" evidence="2">
    <location>
        <begin position="178"/>
        <end position="198"/>
    </location>
</feature>
<feature type="transmembrane region" description="Helical" evidence="2">
    <location>
        <begin position="205"/>
        <end position="225"/>
    </location>
</feature>
<feature type="transmembrane region" description="Helical" evidence="2">
    <location>
        <begin position="241"/>
        <end position="261"/>
    </location>
</feature>
<feature type="transmembrane region" description="Helical" evidence="2">
    <location>
        <begin position="274"/>
        <end position="294"/>
    </location>
</feature>
<feature type="transmembrane region" description="Helical" evidence="2">
    <location>
        <begin position="330"/>
        <end position="350"/>
    </location>
</feature>
<gene>
    <name type="primary">ND2</name>
</gene>
<sequence>MHQMISIFLFLTVVSGTIIVVSAENWFVIWLGLELSTLALIPILWFCFTPRNIEATIKYFLVQAFSAALLLNSALIQAWFSGSWSALIPMESFPSLCLSVALAFNLGLAACHFWLPDVLQGLPFIQGLIIATWQKIAPLFLLFYFNQLNFSYFIILAALISILVGGWGGLNQTQTRKILAFSSIGNMGWIVVTSAFSLGTAAMMLFIYLVINTSIFLILDFLSIFTLGHLNNTSQLSPISITLVILTILSLGGLPPLTGFILKFSSLYSLINNGFIFFSSVMIIGSLLSLFFYLRIAFNTTLILFPQHLISLTAWRNSTEAEPLMAKTWLVSSFSVLSILAIPLTIPLYINV</sequence>
<keyword id="KW-0249">Electron transport</keyword>
<keyword id="KW-0472">Membrane</keyword>
<keyword id="KW-0496">Mitochondrion</keyword>
<keyword id="KW-0999">Mitochondrion inner membrane</keyword>
<keyword id="KW-0520">NAD</keyword>
<keyword id="KW-0679">Respiratory chain</keyword>
<keyword id="KW-1278">Translocase</keyword>
<keyword id="KW-0812">Transmembrane</keyword>
<keyword id="KW-1133">Transmembrane helix</keyword>
<keyword id="KW-0813">Transport</keyword>
<keyword id="KW-0830">Ubiquinone</keyword>
<proteinExistence type="inferred from homology"/>
<reference key="1">
    <citation type="journal article" date="1989" name="J. Biol. Chem.">
        <title>The complete nucleotide sequence, gene organization, and genetic code of the mitochondrial genome of Paracentrotus lividus.</title>
        <authorList>
            <person name="Cantatore P."/>
            <person name="Roberti M."/>
            <person name="Rainaldi G."/>
            <person name="Gadaleta M.N."/>
            <person name="Saccone C."/>
        </authorList>
    </citation>
    <scope>NUCLEOTIDE SEQUENCE [GENOMIC DNA]</scope>
</reference>
<reference key="2">
    <citation type="journal article" date="1987" name="Gene">
        <title>A novel gene order in the Paracentrotus lividus mitochondrial genome.</title>
        <authorList>
            <person name="Cantatore P."/>
            <person name="Roberti M."/>
            <person name="Morisco P."/>
            <person name="Rainaldi G."/>
            <person name="Gadaleta M.N."/>
            <person name="Saccone C."/>
        </authorList>
    </citation>
    <scope>NUCLEOTIDE SEQUENCE [GENOMIC DNA] OF 202-263</scope>
</reference>
<comment type="function">
    <text evidence="1">Core subunit of the mitochondrial membrane respiratory chain NADH dehydrogenase (Complex I) that is believed to belong to the minimal assembly required for catalysis. Complex I functions in the transfer of electrons from NADH to the respiratory chain. The immediate electron acceptor for the enzyme is believed to be ubiquinone (By similarity).</text>
</comment>
<comment type="catalytic activity">
    <reaction>
        <text>a ubiquinone + NADH + 5 H(+)(in) = a ubiquinol + NAD(+) + 4 H(+)(out)</text>
        <dbReference type="Rhea" id="RHEA:29091"/>
        <dbReference type="Rhea" id="RHEA-COMP:9565"/>
        <dbReference type="Rhea" id="RHEA-COMP:9566"/>
        <dbReference type="ChEBI" id="CHEBI:15378"/>
        <dbReference type="ChEBI" id="CHEBI:16389"/>
        <dbReference type="ChEBI" id="CHEBI:17976"/>
        <dbReference type="ChEBI" id="CHEBI:57540"/>
        <dbReference type="ChEBI" id="CHEBI:57945"/>
        <dbReference type="EC" id="7.1.1.2"/>
    </reaction>
</comment>
<comment type="subcellular location">
    <subcellularLocation>
        <location>Mitochondrion inner membrane</location>
        <topology>Multi-pass membrane protein</topology>
    </subcellularLocation>
</comment>
<comment type="similarity">
    <text evidence="3">Belongs to the complex I subunit 2 family.</text>
</comment>
<organism>
    <name type="scientific">Paracentrotus lividus</name>
    <name type="common">Common sea urchin</name>
    <dbReference type="NCBI Taxonomy" id="7656"/>
    <lineage>
        <taxon>Eukaryota</taxon>
        <taxon>Metazoa</taxon>
        <taxon>Echinodermata</taxon>
        <taxon>Eleutherozoa</taxon>
        <taxon>Echinozoa</taxon>
        <taxon>Echinoidea</taxon>
        <taxon>Euechinoidea</taxon>
        <taxon>Echinacea</taxon>
        <taxon>Camarodonta</taxon>
        <taxon>Echinidea</taxon>
        <taxon>Echinidae</taxon>
        <taxon>Paracentrotus</taxon>
    </lineage>
</organism>
<accession>P12771</accession>
<geneLocation type="mitochondrion"/>